<protein>
    <recommendedName>
        <fullName>H-2 class I histocompatibility antigen, alpha chain</fullName>
    </recommendedName>
    <alternativeName>
        <fullName>Clone PAG64</fullName>
    </alternativeName>
</protein>
<evidence type="ECO:0000250" key="1"/>
<evidence type="ECO:0000255" key="2"/>
<evidence type="ECO:0000255" key="3">
    <source>
        <dbReference type="PROSITE-ProRule" id="PRU00114"/>
    </source>
</evidence>
<evidence type="ECO:0000256" key="4">
    <source>
        <dbReference type="SAM" id="MobiDB-lite"/>
    </source>
</evidence>
<evidence type="ECO:0000305" key="5"/>
<evidence type="ECO:0007744" key="6">
    <source>
    </source>
</evidence>
<evidence type="ECO:0007744" key="7">
    <source>
    </source>
</evidence>
<reference key="1">
    <citation type="journal article" date="1983" name="Nature">
        <title>Activation of a Qa/Tla class I major histocompatibility antigen gene is a general feature of oncogenesis in the mouse.</title>
        <authorList>
            <person name="Brickell P.M."/>
            <person name="Latchman D.S."/>
            <person name="Murphy D."/>
            <person name="Willison K."/>
            <person name="Rigby P.W.J."/>
        </authorList>
    </citation>
    <scope>NUCLEOTIDE SEQUENCE [MRNA] OF 1-285 (CLONE PAG64)</scope>
</reference>
<reference key="2">
    <citation type="journal article" date="1981" name="Nature">
        <title>Structure of C-terminal half of two H-2 antigens from cloned mRNA.</title>
        <authorList>
            <person name="Bregegere F."/>
            <person name="Abastado J.P."/>
            <person name="Kvist S."/>
            <person name="Rask L."/>
            <person name="Lalanne J.-L."/>
            <person name="Garoff H."/>
            <person name="Cami B."/>
            <person name="Wiman K.G."/>
            <person name="Larhammar D."/>
            <person name="Peterson P.A."/>
            <person name="Gachelin G."/>
            <person name="Kourilsky P."/>
            <person name="Dobberstein B."/>
        </authorList>
    </citation>
    <scope>NUCLEOTIDE SEQUENCE [MRNA] OF 90-298 (CLONE PH-2D-1)</scope>
</reference>
<reference key="3">
    <citation type="journal article" date="2009" name="Immunity">
        <title>The phagosomal proteome in interferon-gamma-activated macrophages.</title>
        <authorList>
            <person name="Trost M."/>
            <person name="English L."/>
            <person name="Lemieux S."/>
            <person name="Courcelles M."/>
            <person name="Desjardins M."/>
            <person name="Thibault P."/>
        </authorList>
    </citation>
    <scope>PHOSPHORYLATION [LARGE SCALE ANALYSIS] AT SER-289 AND SER-292</scope>
    <scope>VARIANT [LARGE SCALE ANALYSIS] GLY-285</scope>
    <scope>IDENTIFICATION BY MASS SPECTROMETRY [LARGE SCALE ANALYSIS]</scope>
</reference>
<reference key="4">
    <citation type="journal article" date="2010" name="Cell">
        <title>A tissue-specific atlas of mouse protein phosphorylation and expression.</title>
        <authorList>
            <person name="Huttlin E.L."/>
            <person name="Jedrychowski M.P."/>
            <person name="Elias J.E."/>
            <person name="Goswami T."/>
            <person name="Rad R."/>
            <person name="Beausoleil S.A."/>
            <person name="Villen J."/>
            <person name="Haas W."/>
            <person name="Sowa M.E."/>
            <person name="Gygi S.P."/>
        </authorList>
    </citation>
    <scope>VARIANT [LARGE SCALE ANALYSIS] GLY-285</scope>
    <scope>IDENTIFICATION BY MASS SPECTROMETRY [LARGE SCALE ANALYSIS]</scope>
    <source>
        <tissue>Lung</tissue>
        <tissue>Spleen</tissue>
    </source>
</reference>
<accession>P01895</accession>
<gene>
    <name type="primary">H2-D1</name>
</gene>
<keyword id="KW-0025">Alternative splicing</keyword>
<keyword id="KW-1015">Disulfide bond</keyword>
<keyword id="KW-0325">Glycoprotein</keyword>
<keyword id="KW-0391">Immunity</keyword>
<keyword id="KW-0472">Membrane</keyword>
<keyword id="KW-0490">MHC I</keyword>
<keyword id="KW-0597">Phosphoprotein</keyword>
<keyword id="KW-1185">Reference proteome</keyword>
<keyword id="KW-0812">Transmembrane</keyword>
<keyword id="KW-1133">Transmembrane helix</keyword>
<name>HA1Y_MOUSE</name>
<dbReference type="EMBL" id="X00246">
    <property type="protein sequence ID" value="CAA25061.1"/>
    <property type="molecule type" value="mRNA"/>
</dbReference>
<dbReference type="PIR" id="A93322">
    <property type="entry name" value="HLMS1"/>
</dbReference>
<dbReference type="SMR" id="P01895"/>
<dbReference type="GlyCosmos" id="P01895">
    <property type="glycosylation" value="2 sites, No reported glycans"/>
</dbReference>
<dbReference type="iPTMnet" id="P01895"/>
<dbReference type="PhosphoSitePlus" id="P01895"/>
<dbReference type="jPOST" id="P01895"/>
<dbReference type="PeptideAtlas" id="P01895"/>
<dbReference type="ProteomicsDB" id="270925">
    <molecule id="P01895-1"/>
</dbReference>
<dbReference type="ProteomicsDB" id="270926">
    <molecule id="P01895-2"/>
</dbReference>
<dbReference type="Pumba" id="P01895"/>
<dbReference type="AGR" id="MGI:95896"/>
<dbReference type="MGI" id="MGI:95896">
    <property type="gene designation" value="H2-D1"/>
</dbReference>
<dbReference type="ChiTaRS" id="H2-D1">
    <property type="organism name" value="mouse"/>
</dbReference>
<dbReference type="Proteomes" id="UP000000589">
    <property type="component" value="Unplaced"/>
</dbReference>
<dbReference type="GO" id="GO:0009897">
    <property type="term" value="C:external side of plasma membrane"/>
    <property type="evidence" value="ECO:0000314"/>
    <property type="project" value="MGI"/>
</dbReference>
<dbReference type="GO" id="GO:0098553">
    <property type="term" value="C:lumenal side of endoplasmic reticulum membrane"/>
    <property type="evidence" value="ECO:0000304"/>
    <property type="project" value="Reactome"/>
</dbReference>
<dbReference type="GO" id="GO:0042612">
    <property type="term" value="C:MHC class I protein complex"/>
    <property type="evidence" value="ECO:0007669"/>
    <property type="project" value="UniProtKB-KW"/>
</dbReference>
<dbReference type="GO" id="GO:0030670">
    <property type="term" value="C:phagocytic vesicle membrane"/>
    <property type="evidence" value="ECO:0000304"/>
    <property type="project" value="Reactome"/>
</dbReference>
<dbReference type="GO" id="GO:0005886">
    <property type="term" value="C:plasma membrane"/>
    <property type="evidence" value="ECO:0000314"/>
    <property type="project" value="MGI"/>
</dbReference>
<dbReference type="GO" id="GO:0002485">
    <property type="term" value="P:antigen processing and presentation of endogenous peptide antigen via MHC class I via ER pathway, TAP-dependent"/>
    <property type="evidence" value="ECO:0000314"/>
    <property type="project" value="MGI"/>
</dbReference>
<dbReference type="GO" id="GO:0010977">
    <property type="term" value="P:negative regulation of neuron projection development"/>
    <property type="evidence" value="ECO:0000314"/>
    <property type="project" value="MGI"/>
</dbReference>
<dbReference type="GO" id="GO:0001916">
    <property type="term" value="P:positive regulation of T cell mediated cytotoxicity"/>
    <property type="evidence" value="ECO:0000314"/>
    <property type="project" value="MGI"/>
</dbReference>
<dbReference type="GO" id="GO:0001913">
    <property type="term" value="P:T cell mediated cytotoxicity"/>
    <property type="evidence" value="ECO:0000314"/>
    <property type="project" value="MGI"/>
</dbReference>
<dbReference type="CDD" id="cd21020">
    <property type="entry name" value="IgC1_MHC_Ia_H-2Dd"/>
    <property type="match status" value="1"/>
</dbReference>
<dbReference type="FunFam" id="2.60.40.10:FF:000014">
    <property type="entry name" value="H-2 class I histocompatibility antigen, alpha chain"/>
    <property type="match status" value="1"/>
</dbReference>
<dbReference type="FunFam" id="3.30.500.10:FF:000001">
    <property type="entry name" value="H-2 class I histocompatibility antigen, alpha chain"/>
    <property type="match status" value="1"/>
</dbReference>
<dbReference type="Gene3D" id="2.60.40.10">
    <property type="entry name" value="Immunoglobulins"/>
    <property type="match status" value="1"/>
</dbReference>
<dbReference type="Gene3D" id="3.30.500.10">
    <property type="entry name" value="MHC class I-like antigen recognition-like"/>
    <property type="match status" value="1"/>
</dbReference>
<dbReference type="InterPro" id="IPR007110">
    <property type="entry name" value="Ig-like_dom"/>
</dbReference>
<dbReference type="InterPro" id="IPR036179">
    <property type="entry name" value="Ig-like_dom_sf"/>
</dbReference>
<dbReference type="InterPro" id="IPR013783">
    <property type="entry name" value="Ig-like_fold"/>
</dbReference>
<dbReference type="InterPro" id="IPR003006">
    <property type="entry name" value="Ig/MHC_CS"/>
</dbReference>
<dbReference type="InterPro" id="IPR003597">
    <property type="entry name" value="Ig_C1-set"/>
</dbReference>
<dbReference type="InterPro" id="IPR050208">
    <property type="entry name" value="MHC_class-I_related"/>
</dbReference>
<dbReference type="InterPro" id="IPR011161">
    <property type="entry name" value="MHC_I-like_Ag-recog"/>
</dbReference>
<dbReference type="InterPro" id="IPR037055">
    <property type="entry name" value="MHC_I-like_Ag-recog_sf"/>
</dbReference>
<dbReference type="InterPro" id="IPR011162">
    <property type="entry name" value="MHC_I/II-like_Ag-recog"/>
</dbReference>
<dbReference type="InterPro" id="IPR001039">
    <property type="entry name" value="MHC_I_a_a1/a2"/>
</dbReference>
<dbReference type="InterPro" id="IPR010579">
    <property type="entry name" value="MHC_I_a_C"/>
</dbReference>
<dbReference type="PANTHER" id="PTHR16675:SF251">
    <property type="entry name" value="HLA CLASS I HISTOCOMPATIBILITY ANTIGEN, C ALPHA CHAIN"/>
    <property type="match status" value="1"/>
</dbReference>
<dbReference type="PANTHER" id="PTHR16675">
    <property type="entry name" value="MHC CLASS I-RELATED"/>
    <property type="match status" value="1"/>
</dbReference>
<dbReference type="Pfam" id="PF07654">
    <property type="entry name" value="C1-set"/>
    <property type="match status" value="1"/>
</dbReference>
<dbReference type="Pfam" id="PF00129">
    <property type="entry name" value="MHC_I"/>
    <property type="match status" value="1"/>
</dbReference>
<dbReference type="Pfam" id="PF06623">
    <property type="entry name" value="MHC_I_C"/>
    <property type="match status" value="1"/>
</dbReference>
<dbReference type="PRINTS" id="PR01638">
    <property type="entry name" value="MHCCLASSI"/>
</dbReference>
<dbReference type="SMART" id="SM00407">
    <property type="entry name" value="IGc1"/>
    <property type="match status" value="1"/>
</dbReference>
<dbReference type="SUPFAM" id="SSF48726">
    <property type="entry name" value="Immunoglobulin"/>
    <property type="match status" value="1"/>
</dbReference>
<dbReference type="SUPFAM" id="SSF54452">
    <property type="entry name" value="MHC antigen-recognition domain"/>
    <property type="match status" value="1"/>
</dbReference>
<dbReference type="PROSITE" id="PS50835">
    <property type="entry name" value="IG_LIKE"/>
    <property type="match status" value="1"/>
</dbReference>
<dbReference type="PROSITE" id="PS00290">
    <property type="entry name" value="IG_MHC"/>
    <property type="match status" value="1"/>
</dbReference>
<organism>
    <name type="scientific">Mus musculus</name>
    <name type="common">Mouse</name>
    <dbReference type="NCBI Taxonomy" id="10090"/>
    <lineage>
        <taxon>Eukaryota</taxon>
        <taxon>Metazoa</taxon>
        <taxon>Chordata</taxon>
        <taxon>Craniata</taxon>
        <taxon>Vertebrata</taxon>
        <taxon>Euteleostomi</taxon>
        <taxon>Mammalia</taxon>
        <taxon>Eutheria</taxon>
        <taxon>Euarchontoglires</taxon>
        <taxon>Glires</taxon>
        <taxon>Rodentia</taxon>
        <taxon>Myomorpha</taxon>
        <taxon>Muroidea</taxon>
        <taxon>Muridae</taxon>
        <taxon>Murinae</taxon>
        <taxon>Mus</taxon>
        <taxon>Mus</taxon>
    </lineage>
</organism>
<feature type="chain" id="PRO_0000080742" description="H-2 class I histocompatibility antigen, alpha chain">
    <location>
        <begin position="1" status="less than"/>
        <end position="298"/>
    </location>
</feature>
<feature type="topological domain" description="Extracellular" evidence="2">
    <location>
        <begin position="1" status="less than"/>
        <end position="244"/>
    </location>
</feature>
<feature type="transmembrane region" description="Helical" evidence="2">
    <location>
        <begin position="245"/>
        <end position="265"/>
    </location>
</feature>
<feature type="topological domain" description="Cytoplasmic" evidence="2">
    <location>
        <begin position="266"/>
        <end position="298"/>
    </location>
</feature>
<feature type="domain" description="Ig-like C1-type">
    <location>
        <begin position="142"/>
        <end position="230"/>
    </location>
</feature>
<feature type="region of interest" description="Disordered" evidence="4">
    <location>
        <begin position="277"/>
        <end position="298"/>
    </location>
</feature>
<feature type="modified residue" description="Phosphoserine" evidence="6">
    <location>
        <position position="289"/>
    </location>
</feature>
<feature type="modified residue" description="Phosphoserine" evidence="6">
    <location>
        <position position="292"/>
    </location>
</feature>
<feature type="glycosylation site" description="N-linked (GlcNAc...) asparagine" evidence="1">
    <location>
        <position position="43"/>
    </location>
</feature>
<feature type="glycosylation site" description="N-linked (GlcNAc...) asparagine" evidence="2">
    <location>
        <position position="133"/>
    </location>
</feature>
<feature type="disulfide bond" evidence="3">
    <location>
        <begin position="58"/>
        <end position="121"/>
    </location>
</feature>
<feature type="disulfide bond" evidence="3">
    <location>
        <begin position="160"/>
        <end position="216"/>
    </location>
</feature>
<feature type="splice variant" id="VSP_003228" description="In isoform 2." evidence="5">
    <location>
        <begin position="286"/>
        <end position="298"/>
    </location>
</feature>
<feature type="sequence variant" description="In clone PH-2D-1.">
    <original>Q</original>
    <variation>L</variation>
    <location>
        <position position="212"/>
    </location>
</feature>
<feature type="sequence variant" description="In clone PH-2D-1.">
    <location>
        <position position="223"/>
    </location>
</feature>
<feature type="sequence variant" description="In clone PH-2D-1." evidence="6 7">
    <original>V</original>
    <variation>G</variation>
    <location>
        <position position="285"/>
    </location>
</feature>
<feature type="non-terminal residue">
    <location>
        <position position="1"/>
    </location>
</feature>
<proteinExistence type="evidence at protein level"/>
<sequence>RYEPRARWIEQEGPEYWERETRRAKGNEQSFRVDLRTALRYYNQSAGGSHTLQWMAGCDVESDGRLLRGYWQFAYDGCDYIALNEDLKTWTAADMAAQITRRKWEQAGAAERDRAYLEGECVEWLRRYLKNGNATLLRTDPPKAHVTHHRRPEGDVTLRCWALGFYPADITLTWQLNGEELTQEMELVETRPAGDGTFQKWASVVVPLGKEQKYTCHVEHEGLPEPLTLRWGKEEPPSSTKTNTVIIAVPVVLGAVVILGAVMAFVMKRRRNTGGKGGDYALAPVSQSSDMSLPDCKV</sequence>
<comment type="function">
    <text>Involved in the presentation of foreign antigens to the immune system.</text>
</comment>
<comment type="subunit">
    <text>Heterodimer of an alpha chain and a beta chain (beta-2-microglobulin).</text>
</comment>
<comment type="subcellular location">
    <subcellularLocation>
        <location>Membrane</location>
        <topology>Single-pass type I membrane protein</topology>
    </subcellularLocation>
</comment>
<comment type="alternative products">
    <event type="alternative splicing"/>
    <isoform>
        <id>P01895-1</id>
        <name>1</name>
        <sequence type="displayed"/>
    </isoform>
    <isoform>
        <id>P01895-2</id>
        <name>2</name>
        <sequence type="described" ref="VSP_003228"/>
    </isoform>
</comment>
<comment type="miscellaneous">
    <text>The antigen encoded by the PAG64 clone, normally expressed only on lymphocyte subsets and thymocytes, is found in increased concentrations in all transformed cells tested, in an embryonic carcinoma cell line, and in pluripotent embryonic cells. Activation of the gene appears to be a general feature of carcinogenesis in the mouse. The PAG64 clone, and related cDNA clones, have in common a repetitive sequence in their 3' transcription units that has characteristics of a transposable element.</text>
</comment>
<comment type="miscellaneous">
    <molecule>Isoform 2</molecule>
    <text evidence="5">Exon 7 is missing.</text>
</comment>
<comment type="similarity">
    <text evidence="5">Belongs to the MHC class I family.</text>
</comment>